<organism>
    <name type="scientific">Rattus norvegicus</name>
    <name type="common">Rat</name>
    <dbReference type="NCBI Taxonomy" id="10116"/>
    <lineage>
        <taxon>Eukaryota</taxon>
        <taxon>Metazoa</taxon>
        <taxon>Chordata</taxon>
        <taxon>Craniata</taxon>
        <taxon>Vertebrata</taxon>
        <taxon>Euteleostomi</taxon>
        <taxon>Mammalia</taxon>
        <taxon>Eutheria</taxon>
        <taxon>Euarchontoglires</taxon>
        <taxon>Glires</taxon>
        <taxon>Rodentia</taxon>
        <taxon>Myomorpha</taxon>
        <taxon>Muroidea</taxon>
        <taxon>Muridae</taxon>
        <taxon>Murinae</taxon>
        <taxon>Rattus</taxon>
    </lineage>
</organism>
<protein>
    <recommendedName>
        <fullName>Ciliogenesis-associated TTC17-interacting protein</fullName>
    </recommendedName>
</protein>
<gene>
    <name type="primary">Catip</name>
</gene>
<name>CATIP_RAT</name>
<reference key="1">
    <citation type="journal article" date="2004" name="Nature">
        <title>Genome sequence of the Brown Norway rat yields insights into mammalian evolution.</title>
        <authorList>
            <person name="Gibbs R.A."/>
            <person name="Weinstock G.M."/>
            <person name="Metzker M.L."/>
            <person name="Muzny D.M."/>
            <person name="Sodergren E.J."/>
            <person name="Scherer S."/>
            <person name="Scott G."/>
            <person name="Steffen D."/>
            <person name="Worley K.C."/>
            <person name="Burch P.E."/>
            <person name="Okwuonu G."/>
            <person name="Hines S."/>
            <person name="Lewis L."/>
            <person name="Deramo C."/>
            <person name="Delgado O."/>
            <person name="Dugan-Rocha S."/>
            <person name="Miner G."/>
            <person name="Morgan M."/>
            <person name="Hawes A."/>
            <person name="Gill R."/>
            <person name="Holt R.A."/>
            <person name="Adams M.D."/>
            <person name="Amanatides P.G."/>
            <person name="Baden-Tillson H."/>
            <person name="Barnstead M."/>
            <person name="Chin S."/>
            <person name="Evans C.A."/>
            <person name="Ferriera S."/>
            <person name="Fosler C."/>
            <person name="Glodek A."/>
            <person name="Gu Z."/>
            <person name="Jennings D."/>
            <person name="Kraft C.L."/>
            <person name="Nguyen T."/>
            <person name="Pfannkoch C.M."/>
            <person name="Sitter C."/>
            <person name="Sutton G.G."/>
            <person name="Venter J.C."/>
            <person name="Woodage T."/>
            <person name="Smith D."/>
            <person name="Lee H.-M."/>
            <person name="Gustafson E."/>
            <person name="Cahill P."/>
            <person name="Kana A."/>
            <person name="Doucette-Stamm L."/>
            <person name="Weinstock K."/>
            <person name="Fechtel K."/>
            <person name="Weiss R.B."/>
            <person name="Dunn D.M."/>
            <person name="Green E.D."/>
            <person name="Blakesley R.W."/>
            <person name="Bouffard G.G."/>
            <person name="De Jong P.J."/>
            <person name="Osoegawa K."/>
            <person name="Zhu B."/>
            <person name="Marra M."/>
            <person name="Schein J."/>
            <person name="Bosdet I."/>
            <person name="Fjell C."/>
            <person name="Jones S."/>
            <person name="Krzywinski M."/>
            <person name="Mathewson C."/>
            <person name="Siddiqui A."/>
            <person name="Wye N."/>
            <person name="McPherson J."/>
            <person name="Zhao S."/>
            <person name="Fraser C.M."/>
            <person name="Shetty J."/>
            <person name="Shatsman S."/>
            <person name="Geer K."/>
            <person name="Chen Y."/>
            <person name="Abramzon S."/>
            <person name="Nierman W.C."/>
            <person name="Havlak P.H."/>
            <person name="Chen R."/>
            <person name="Durbin K.J."/>
            <person name="Egan A."/>
            <person name="Ren Y."/>
            <person name="Song X.-Z."/>
            <person name="Li B."/>
            <person name="Liu Y."/>
            <person name="Qin X."/>
            <person name="Cawley S."/>
            <person name="Cooney A.J."/>
            <person name="D'Souza L.M."/>
            <person name="Martin K."/>
            <person name="Wu J.Q."/>
            <person name="Gonzalez-Garay M.L."/>
            <person name="Jackson A.R."/>
            <person name="Kalafus K.J."/>
            <person name="McLeod M.P."/>
            <person name="Milosavljevic A."/>
            <person name="Virk D."/>
            <person name="Volkov A."/>
            <person name="Wheeler D.A."/>
            <person name="Zhang Z."/>
            <person name="Bailey J.A."/>
            <person name="Eichler E.E."/>
            <person name="Tuzun E."/>
            <person name="Birney E."/>
            <person name="Mongin E."/>
            <person name="Ureta-Vidal A."/>
            <person name="Woodwark C."/>
            <person name="Zdobnov E."/>
            <person name="Bork P."/>
            <person name="Suyama M."/>
            <person name="Torrents D."/>
            <person name="Alexandersson M."/>
            <person name="Trask B.J."/>
            <person name="Young J.M."/>
            <person name="Huang H."/>
            <person name="Wang H."/>
            <person name="Xing H."/>
            <person name="Daniels S."/>
            <person name="Gietzen D."/>
            <person name="Schmidt J."/>
            <person name="Stevens K."/>
            <person name="Vitt U."/>
            <person name="Wingrove J."/>
            <person name="Camara F."/>
            <person name="Mar Alba M."/>
            <person name="Abril J.F."/>
            <person name="Guigo R."/>
            <person name="Smit A."/>
            <person name="Dubchak I."/>
            <person name="Rubin E.M."/>
            <person name="Couronne O."/>
            <person name="Poliakov A."/>
            <person name="Huebner N."/>
            <person name="Ganten D."/>
            <person name="Goesele C."/>
            <person name="Hummel O."/>
            <person name="Kreitler T."/>
            <person name="Lee Y.-A."/>
            <person name="Monti J."/>
            <person name="Schulz H."/>
            <person name="Zimdahl H."/>
            <person name="Himmelbauer H."/>
            <person name="Lehrach H."/>
            <person name="Jacob H.J."/>
            <person name="Bromberg S."/>
            <person name="Gullings-Handley J."/>
            <person name="Jensen-Seaman M.I."/>
            <person name="Kwitek A.E."/>
            <person name="Lazar J."/>
            <person name="Pasko D."/>
            <person name="Tonellato P.J."/>
            <person name="Twigger S."/>
            <person name="Ponting C.P."/>
            <person name="Duarte J.M."/>
            <person name="Rice S."/>
            <person name="Goodstadt L."/>
            <person name="Beatson S.A."/>
            <person name="Emes R.D."/>
            <person name="Winter E.E."/>
            <person name="Webber C."/>
            <person name="Brandt P."/>
            <person name="Nyakatura G."/>
            <person name="Adetobi M."/>
            <person name="Chiaromonte F."/>
            <person name="Elnitski L."/>
            <person name="Eswara P."/>
            <person name="Hardison R.C."/>
            <person name="Hou M."/>
            <person name="Kolbe D."/>
            <person name="Makova K."/>
            <person name="Miller W."/>
            <person name="Nekrutenko A."/>
            <person name="Riemer C."/>
            <person name="Schwartz S."/>
            <person name="Taylor J."/>
            <person name="Yang S."/>
            <person name="Zhang Y."/>
            <person name="Lindpaintner K."/>
            <person name="Andrews T.D."/>
            <person name="Caccamo M."/>
            <person name="Clamp M."/>
            <person name="Clarke L."/>
            <person name="Curwen V."/>
            <person name="Durbin R.M."/>
            <person name="Eyras E."/>
            <person name="Searle S.M."/>
            <person name="Cooper G.M."/>
            <person name="Batzoglou S."/>
            <person name="Brudno M."/>
            <person name="Sidow A."/>
            <person name="Stone E.A."/>
            <person name="Payseur B.A."/>
            <person name="Bourque G."/>
            <person name="Lopez-Otin C."/>
            <person name="Puente X.S."/>
            <person name="Chakrabarti K."/>
            <person name="Chatterji S."/>
            <person name="Dewey C."/>
            <person name="Pachter L."/>
            <person name="Bray N."/>
            <person name="Yap V.B."/>
            <person name="Caspi A."/>
            <person name="Tesler G."/>
            <person name="Pevzner P.A."/>
            <person name="Haussler D."/>
            <person name="Roskin K.M."/>
            <person name="Baertsch R."/>
            <person name="Clawson H."/>
            <person name="Furey T.S."/>
            <person name="Hinrichs A.S."/>
            <person name="Karolchik D."/>
            <person name="Kent W.J."/>
            <person name="Rosenbloom K.R."/>
            <person name="Trumbower H."/>
            <person name="Weirauch M."/>
            <person name="Cooper D.N."/>
            <person name="Stenson P.D."/>
            <person name="Ma B."/>
            <person name="Brent M."/>
            <person name="Arumugam M."/>
            <person name="Shteynberg D."/>
            <person name="Copley R.R."/>
            <person name="Taylor M.S."/>
            <person name="Riethman H."/>
            <person name="Mudunuri U."/>
            <person name="Peterson J."/>
            <person name="Guyer M."/>
            <person name="Felsenfeld A."/>
            <person name="Old S."/>
            <person name="Mockrin S."/>
            <person name="Collins F.S."/>
        </authorList>
    </citation>
    <scope>NUCLEOTIDE SEQUENCE [LARGE SCALE GENOMIC DNA]</scope>
    <source>
        <strain>Brown Norway</strain>
    </source>
</reference>
<reference key="2">
    <citation type="journal article" date="2014" name="PLoS ONE">
        <title>C2orf62 and TTC17 Are Involved in Actin Organization and Ciliogenesis in Zebrafish and Human.</title>
        <authorList>
            <person name="Bontems F."/>
            <person name="Fish R.J."/>
            <person name="Borlat I."/>
            <person name="Lembo F."/>
            <person name="Chocu S."/>
            <person name="Chalmel F."/>
            <person name="Borg J.P."/>
            <person name="Pineau C."/>
            <person name="Neerman-Arbez M."/>
            <person name="Bairoch A."/>
            <person name="Lane L."/>
        </authorList>
    </citation>
    <scope>SUBCELLULAR LOCATION</scope>
    <scope>TISSUE SPECIFICITY</scope>
</reference>
<accession>M0RAU5</accession>
<feature type="chain" id="PRO_0000426007" description="Ciliogenesis-associated TTC17-interacting protein">
    <location>
        <begin position="1"/>
        <end position="489"/>
    </location>
</feature>
<feature type="region of interest" description="Disordered" evidence="2">
    <location>
        <begin position="350"/>
        <end position="412"/>
    </location>
</feature>
<feature type="region of interest" description="Disordered" evidence="2">
    <location>
        <begin position="438"/>
        <end position="489"/>
    </location>
</feature>
<feature type="compositionally biased region" description="Acidic residues" evidence="2">
    <location>
        <begin position="363"/>
        <end position="412"/>
    </location>
</feature>
<comment type="function">
    <text evidence="1">Plays a role in primary ciliogenesis by modulating actin polymerization.</text>
</comment>
<comment type="subunit">
    <text evidence="1">Interacts with TTC17.</text>
</comment>
<comment type="subcellular location">
    <subcellularLocation>
        <location evidence="3">Nucleus</location>
    </subcellularLocation>
    <subcellularLocation>
        <location evidence="1">Cytoplasm</location>
    </subcellularLocation>
    <subcellularLocation>
        <location evidence="1">Cell membrane</location>
    </subcellularLocation>
    <subcellularLocation>
        <location evidence="1">Cytoplasm</location>
        <location evidence="1">Cytoskeleton</location>
    </subcellularLocation>
    <text evidence="1">Colocalized with TTC17 at F-actin rich zones and at dynamic plasma membrane protrusions.</text>
</comment>
<comment type="tissue specificity">
    <text evidence="3">Expressed in testis and ovary. Strongly expressed in pachytene spermatocytes and round spermatids compared to spermatogonia and somatic cells. Expressed in Leydig cells (at protein level).</text>
</comment>
<comment type="similarity">
    <text evidence="4">Belongs to the CATIP family.</text>
</comment>
<proteinExistence type="evidence at protein level"/>
<dbReference type="EMBL" id="AABR06061095">
    <property type="status" value="NOT_ANNOTATED_CDS"/>
    <property type="molecule type" value="Genomic_DNA"/>
</dbReference>
<dbReference type="SMR" id="M0RAU5"/>
<dbReference type="FunCoup" id="M0RAU5">
    <property type="interactions" value="12"/>
</dbReference>
<dbReference type="STRING" id="10116.ENSRNOP00000066656"/>
<dbReference type="PhosphoSitePlus" id="M0RAU5"/>
<dbReference type="PaxDb" id="10116-ENSRNOP00000066656"/>
<dbReference type="AGR" id="RGD:1596071"/>
<dbReference type="RGD" id="1596071">
    <property type="gene designation" value="Catip"/>
</dbReference>
<dbReference type="eggNOG" id="ENOG502QPJE">
    <property type="taxonomic scope" value="Eukaryota"/>
</dbReference>
<dbReference type="InParanoid" id="M0RAU5"/>
<dbReference type="PRO" id="PR:M0RAU5"/>
<dbReference type="Proteomes" id="UP000002494">
    <property type="component" value="Unplaced"/>
</dbReference>
<dbReference type="GO" id="GO:0015629">
    <property type="term" value="C:actin cytoskeleton"/>
    <property type="evidence" value="ECO:0000250"/>
    <property type="project" value="UniProtKB"/>
</dbReference>
<dbReference type="GO" id="GO:0005737">
    <property type="term" value="C:cytoplasm"/>
    <property type="evidence" value="ECO:0000314"/>
    <property type="project" value="UniProtKB"/>
</dbReference>
<dbReference type="GO" id="GO:0005634">
    <property type="term" value="C:nucleus"/>
    <property type="evidence" value="ECO:0000250"/>
    <property type="project" value="UniProtKB"/>
</dbReference>
<dbReference type="GO" id="GO:0005886">
    <property type="term" value="C:plasma membrane"/>
    <property type="evidence" value="ECO:0000250"/>
    <property type="project" value="UniProtKB"/>
</dbReference>
<dbReference type="GO" id="GO:0030041">
    <property type="term" value="P:actin filament polymerization"/>
    <property type="evidence" value="ECO:0000250"/>
    <property type="project" value="UniProtKB"/>
</dbReference>
<dbReference type="GO" id="GO:0044782">
    <property type="term" value="P:cilium organization"/>
    <property type="evidence" value="ECO:0000250"/>
    <property type="project" value="UniProtKB"/>
</dbReference>
<dbReference type="InterPro" id="IPR048777">
    <property type="entry name" value="CATIP_N"/>
</dbReference>
<dbReference type="PANTHER" id="PTHR15505:SF3">
    <property type="entry name" value="CILIOGENESIS-ASSOCIATED TTC17-INTERACTING PROTEIN"/>
    <property type="match status" value="1"/>
</dbReference>
<dbReference type="PANTHER" id="PTHR15505">
    <property type="entry name" value="RIIA DOMAIN-CONTAINING PROTEIN 1"/>
    <property type="match status" value="1"/>
</dbReference>
<dbReference type="Pfam" id="PF21772">
    <property type="entry name" value="CATIP_N"/>
    <property type="match status" value="1"/>
</dbReference>
<keyword id="KW-1003">Cell membrane</keyword>
<keyword id="KW-0970">Cilium biogenesis/degradation</keyword>
<keyword id="KW-0963">Cytoplasm</keyword>
<keyword id="KW-0206">Cytoskeleton</keyword>
<keyword id="KW-0472">Membrane</keyword>
<keyword id="KW-0539">Nucleus</keyword>
<keyword id="KW-1185">Reference proteome</keyword>
<sequence length="489" mass="55767">MGDKAKGEGMVWGLEAGPGEASLCHTGLEDMLLFFPETLAILSDTGEPQGELTIEVQKGKYKDDLGILTHCLLVHASSRGFLDKSVCGSSLLGYLNEHLELMEQHSQEFIKFPIIPMERKMSVLKQDDQLVVSRSVKEGEETKTGVSVFPCKSLKGFVSSAANVVLLRVMAWRQSVPSGARFLALDSEGKLCYCTYKSLGFQTIQVGNQQAEMFIVEQTIHSEDGIPFSCQFYLLSDGHLAKRVQVGSPGCCIITKMPLIREEDVIEPPPTFDRKPLVWEEDLELYSKFLDRKEQLRLSHTRYLRQHPEAQALVSDFLLFLLLRRPEDVVTFAAEHFGPFAALRSPIPALRSSHQPSPFRSLEEEEEGEEEEEEEEEEEEGEEEGEGKEEVEEVEIEGDDDYLYVDEEEEVEDDIYYDSYYYKYEDENIYEDENIYYDNYDVDNDNDDIDNYDNDDDDDDDVDDDDDVKVDDDNVDVDNDNVDVDNDNI</sequence>
<evidence type="ECO:0000250" key="1">
    <source>
        <dbReference type="UniProtKB" id="Q7Z7H3"/>
    </source>
</evidence>
<evidence type="ECO:0000256" key="2">
    <source>
        <dbReference type="SAM" id="MobiDB-lite"/>
    </source>
</evidence>
<evidence type="ECO:0000269" key="3">
    <source>
    </source>
</evidence>
<evidence type="ECO:0000305" key="4"/>